<accession>B4RT39</accession>
<accession>F2GAK1</accession>
<evidence type="ECO:0000255" key="1">
    <source>
        <dbReference type="HAMAP-Rule" id="MF_01326"/>
    </source>
</evidence>
<evidence type="ECO:0000305" key="2"/>
<gene>
    <name evidence="1" type="primary">rplX</name>
    <name type="ordered locus">MADE_1014005</name>
</gene>
<reference key="1">
    <citation type="journal article" date="2008" name="ISME J.">
        <title>Comparative genomics of two ecotypes of the marine planktonic copiotroph Alteromonas macleodii suggests alternative lifestyles associated with different kinds of particulate organic matter.</title>
        <authorList>
            <person name="Ivars-Martinez E."/>
            <person name="Martin-Cuadrado A.-B."/>
            <person name="D'Auria G."/>
            <person name="Mira A."/>
            <person name="Ferriera S."/>
            <person name="Johnson J."/>
            <person name="Friedman R."/>
            <person name="Rodriguez-Valera F."/>
        </authorList>
    </citation>
    <scope>NUCLEOTIDE SEQUENCE [LARGE SCALE GENOMIC DNA]</scope>
    <source>
        <strain>DSM 17117 / CIP 110805 / LMG 28347 / Deep ecotype</strain>
    </source>
</reference>
<organism>
    <name type="scientific">Alteromonas mediterranea (strain DSM 17117 / CIP 110805 / LMG 28347 / Deep ecotype)</name>
    <dbReference type="NCBI Taxonomy" id="1774373"/>
    <lineage>
        <taxon>Bacteria</taxon>
        <taxon>Pseudomonadati</taxon>
        <taxon>Pseudomonadota</taxon>
        <taxon>Gammaproteobacteria</taxon>
        <taxon>Alteromonadales</taxon>
        <taxon>Alteromonadaceae</taxon>
        <taxon>Alteromonas/Salinimonas group</taxon>
        <taxon>Alteromonas</taxon>
    </lineage>
</organism>
<feature type="chain" id="PRO_1000141956" description="Large ribosomal subunit protein uL24">
    <location>
        <begin position="1"/>
        <end position="104"/>
    </location>
</feature>
<name>RL24_ALTMD</name>
<sequence>MANKIRRDDEVVVLAGKDKGKQGKVLRVLIADNRVIVEGVNLVKKHTKPNPQLGVAGGIVEKEASIHVSNVAIVNPATGKADRVGFRFEDEKKVRFFKSNGELV</sequence>
<dbReference type="EMBL" id="CP001103">
    <property type="protein sequence ID" value="AEA98935.1"/>
    <property type="molecule type" value="Genomic_DNA"/>
</dbReference>
<dbReference type="RefSeq" id="WP_012519227.1">
    <property type="nucleotide sequence ID" value="NC_011138.3"/>
</dbReference>
<dbReference type="SMR" id="B4RT39"/>
<dbReference type="GeneID" id="56343835"/>
<dbReference type="KEGG" id="amc:MADE_1014005"/>
<dbReference type="HOGENOM" id="CLU_093315_2_2_6"/>
<dbReference type="Proteomes" id="UP000001870">
    <property type="component" value="Chromosome"/>
</dbReference>
<dbReference type="GO" id="GO:1990904">
    <property type="term" value="C:ribonucleoprotein complex"/>
    <property type="evidence" value="ECO:0007669"/>
    <property type="project" value="UniProtKB-KW"/>
</dbReference>
<dbReference type="GO" id="GO:0005840">
    <property type="term" value="C:ribosome"/>
    <property type="evidence" value="ECO:0007669"/>
    <property type="project" value="UniProtKB-KW"/>
</dbReference>
<dbReference type="GO" id="GO:0019843">
    <property type="term" value="F:rRNA binding"/>
    <property type="evidence" value="ECO:0007669"/>
    <property type="project" value="UniProtKB-UniRule"/>
</dbReference>
<dbReference type="GO" id="GO:0003735">
    <property type="term" value="F:structural constituent of ribosome"/>
    <property type="evidence" value="ECO:0007669"/>
    <property type="project" value="InterPro"/>
</dbReference>
<dbReference type="GO" id="GO:0006412">
    <property type="term" value="P:translation"/>
    <property type="evidence" value="ECO:0007669"/>
    <property type="project" value="UniProtKB-UniRule"/>
</dbReference>
<dbReference type="CDD" id="cd06089">
    <property type="entry name" value="KOW_RPL26"/>
    <property type="match status" value="1"/>
</dbReference>
<dbReference type="FunFam" id="2.30.30.30:FF:000004">
    <property type="entry name" value="50S ribosomal protein L24"/>
    <property type="match status" value="1"/>
</dbReference>
<dbReference type="Gene3D" id="2.30.30.30">
    <property type="match status" value="1"/>
</dbReference>
<dbReference type="HAMAP" id="MF_01326_B">
    <property type="entry name" value="Ribosomal_uL24_B"/>
    <property type="match status" value="1"/>
</dbReference>
<dbReference type="InterPro" id="IPR005824">
    <property type="entry name" value="KOW"/>
</dbReference>
<dbReference type="InterPro" id="IPR014722">
    <property type="entry name" value="Rib_uL2_dom2"/>
</dbReference>
<dbReference type="InterPro" id="IPR003256">
    <property type="entry name" value="Ribosomal_uL24"/>
</dbReference>
<dbReference type="InterPro" id="IPR005825">
    <property type="entry name" value="Ribosomal_uL24_CS"/>
</dbReference>
<dbReference type="InterPro" id="IPR041988">
    <property type="entry name" value="Ribosomal_uL24_KOW"/>
</dbReference>
<dbReference type="InterPro" id="IPR008991">
    <property type="entry name" value="Translation_prot_SH3-like_sf"/>
</dbReference>
<dbReference type="NCBIfam" id="TIGR01079">
    <property type="entry name" value="rplX_bact"/>
    <property type="match status" value="1"/>
</dbReference>
<dbReference type="PANTHER" id="PTHR12903">
    <property type="entry name" value="MITOCHONDRIAL RIBOSOMAL PROTEIN L24"/>
    <property type="match status" value="1"/>
</dbReference>
<dbReference type="Pfam" id="PF00467">
    <property type="entry name" value="KOW"/>
    <property type="match status" value="1"/>
</dbReference>
<dbReference type="Pfam" id="PF17136">
    <property type="entry name" value="ribosomal_L24"/>
    <property type="match status" value="1"/>
</dbReference>
<dbReference type="SMART" id="SM00739">
    <property type="entry name" value="KOW"/>
    <property type="match status" value="1"/>
</dbReference>
<dbReference type="SUPFAM" id="SSF50104">
    <property type="entry name" value="Translation proteins SH3-like domain"/>
    <property type="match status" value="1"/>
</dbReference>
<dbReference type="PROSITE" id="PS01108">
    <property type="entry name" value="RIBOSOMAL_L24"/>
    <property type="match status" value="1"/>
</dbReference>
<keyword id="KW-0687">Ribonucleoprotein</keyword>
<keyword id="KW-0689">Ribosomal protein</keyword>
<keyword id="KW-0694">RNA-binding</keyword>
<keyword id="KW-0699">rRNA-binding</keyword>
<protein>
    <recommendedName>
        <fullName evidence="1">Large ribosomal subunit protein uL24</fullName>
    </recommendedName>
    <alternativeName>
        <fullName evidence="2">50S ribosomal protein L24</fullName>
    </alternativeName>
</protein>
<proteinExistence type="inferred from homology"/>
<comment type="function">
    <text evidence="1">One of two assembly initiator proteins, it binds directly to the 5'-end of the 23S rRNA, where it nucleates assembly of the 50S subunit.</text>
</comment>
<comment type="function">
    <text evidence="1">One of the proteins that surrounds the polypeptide exit tunnel on the outside of the subunit.</text>
</comment>
<comment type="subunit">
    <text evidence="1">Part of the 50S ribosomal subunit.</text>
</comment>
<comment type="similarity">
    <text evidence="1">Belongs to the universal ribosomal protein uL24 family.</text>
</comment>